<gene>
    <name evidence="1" type="primary">atpA</name>
    <name type="ordered locus">aq_679</name>
</gene>
<feature type="chain" id="PRO_0000144313" description="ATP synthase subunit alpha">
    <location>
        <begin position="1"/>
        <end position="503"/>
    </location>
</feature>
<feature type="binding site" evidence="1">
    <location>
        <begin position="170"/>
        <end position="177"/>
    </location>
    <ligand>
        <name>ATP</name>
        <dbReference type="ChEBI" id="CHEBI:30616"/>
    </ligand>
</feature>
<feature type="site" description="Required for activity" evidence="1">
    <location>
        <position position="363"/>
    </location>
</feature>
<protein>
    <recommendedName>
        <fullName evidence="1">ATP synthase subunit alpha</fullName>
        <ecNumber evidence="1">7.1.2.2</ecNumber>
    </recommendedName>
    <alternativeName>
        <fullName evidence="1">ATP synthase F1 sector subunit alpha</fullName>
    </alternativeName>
    <alternativeName>
        <fullName evidence="1">F-ATPase subunit alpha</fullName>
    </alternativeName>
</protein>
<evidence type="ECO:0000255" key="1">
    <source>
        <dbReference type="HAMAP-Rule" id="MF_01346"/>
    </source>
</evidence>
<reference key="1">
    <citation type="journal article" date="1998" name="Nature">
        <title>The complete genome of the hyperthermophilic bacterium Aquifex aeolicus.</title>
        <authorList>
            <person name="Deckert G."/>
            <person name="Warren P.V."/>
            <person name="Gaasterland T."/>
            <person name="Young W.G."/>
            <person name="Lenox A.L."/>
            <person name="Graham D.E."/>
            <person name="Overbeek R."/>
            <person name="Snead M.A."/>
            <person name="Keller M."/>
            <person name="Aujay M."/>
            <person name="Huber R."/>
            <person name="Feldman R.A."/>
            <person name="Short J.M."/>
            <person name="Olsen G.J."/>
            <person name="Swanson R.V."/>
        </authorList>
    </citation>
    <scope>NUCLEOTIDE SEQUENCE [LARGE SCALE GENOMIC DNA]</scope>
    <source>
        <strain>VF5</strain>
    </source>
</reference>
<sequence length="503" mass="55579">MATLTYEEALEILRQQIKDFEPEAKMEEVGVVYYVGDGVARAYGLENVMAMEIVEFQGGQQGIAFNLEEDNVGIIILGSETGIEEGHIVKRTGRILDAPVGEGLVGRVIDPLGNPLDGKGPIQFEYRSPVEKIAPGVVKRKPVHEPLQTGIKAIDAMIPIGRGQRELIIGDRATGKTTVAIDTILAQKNSDVYCIYVAVGQKRAAIARLIELLEREGAMEYTTVVVASASDPASLQYLAPFVGCTIGEYFRDNGKHALIIYDDLSKHAEAYRQLSLLMRRPPGREAYPGDVFYLHSRLLERAAKLNDDLGAGSLTALPIIETKAGDVAAYIPTNVISITDGQIYLEADLFNKGIRPAINVGLSVSRVGGAAQIKAMKQVAGTLRLELAQFRELEAFVQFASELDKATQQQINRGLRLVELLKQEPYNPIPVEKQIVLIYAGTHGYLDDIPVESVRKFEKELYAYLDNERPDILKEISEKKKLDEELEKKIKEALDAFKQKFVP</sequence>
<proteinExistence type="inferred from homology"/>
<name>ATPA_AQUAE</name>
<keyword id="KW-0066">ATP synthesis</keyword>
<keyword id="KW-0067">ATP-binding</keyword>
<keyword id="KW-0997">Cell inner membrane</keyword>
<keyword id="KW-1003">Cell membrane</keyword>
<keyword id="KW-0139">CF(1)</keyword>
<keyword id="KW-0375">Hydrogen ion transport</keyword>
<keyword id="KW-0406">Ion transport</keyword>
<keyword id="KW-0472">Membrane</keyword>
<keyword id="KW-0547">Nucleotide-binding</keyword>
<keyword id="KW-1185">Reference proteome</keyword>
<keyword id="KW-1278">Translocase</keyword>
<keyword id="KW-0813">Transport</keyword>
<comment type="function">
    <text evidence="1">Produces ATP from ADP in the presence of a proton gradient across the membrane. The alpha chain is a regulatory subunit.</text>
</comment>
<comment type="catalytic activity">
    <reaction evidence="1">
        <text>ATP + H2O + 4 H(+)(in) = ADP + phosphate + 5 H(+)(out)</text>
        <dbReference type="Rhea" id="RHEA:57720"/>
        <dbReference type="ChEBI" id="CHEBI:15377"/>
        <dbReference type="ChEBI" id="CHEBI:15378"/>
        <dbReference type="ChEBI" id="CHEBI:30616"/>
        <dbReference type="ChEBI" id="CHEBI:43474"/>
        <dbReference type="ChEBI" id="CHEBI:456216"/>
        <dbReference type="EC" id="7.1.2.2"/>
    </reaction>
</comment>
<comment type="subunit">
    <text evidence="1">F-type ATPases have 2 components, CF(1) - the catalytic core - and CF(0) - the membrane proton channel. CF(1) has five subunits: alpha(3), beta(3), gamma(1), delta(1), epsilon(1). CF(0) has three main subunits: a(1), b(2) and c(9-12). The alpha and beta chains form an alternating ring which encloses part of the gamma chain. CF(1) is attached to CF(0) by a central stalk formed by the gamma and epsilon chains, while a peripheral stalk is formed by the delta and b chains.</text>
</comment>
<comment type="subcellular location">
    <subcellularLocation>
        <location evidence="1">Cell inner membrane</location>
        <topology evidence="1">Peripheral membrane protein</topology>
    </subcellularLocation>
</comment>
<comment type="similarity">
    <text evidence="1">Belongs to the ATPase alpha/beta chains family.</text>
</comment>
<dbReference type="EC" id="7.1.2.2" evidence="1"/>
<dbReference type="EMBL" id="AE000657">
    <property type="protein sequence ID" value="AAC06855.1"/>
    <property type="molecule type" value="Genomic_DNA"/>
</dbReference>
<dbReference type="PIR" id="G70359">
    <property type="entry name" value="G70359"/>
</dbReference>
<dbReference type="RefSeq" id="NP_213467.1">
    <property type="nucleotide sequence ID" value="NC_000918.1"/>
</dbReference>
<dbReference type="RefSeq" id="WP_010880405.1">
    <property type="nucleotide sequence ID" value="NC_000918.1"/>
</dbReference>
<dbReference type="SMR" id="O66907"/>
<dbReference type="FunCoup" id="O66907">
    <property type="interactions" value="332"/>
</dbReference>
<dbReference type="STRING" id="224324.aq_679"/>
<dbReference type="EnsemblBacteria" id="AAC06855">
    <property type="protein sequence ID" value="AAC06855"/>
    <property type="gene ID" value="aq_679"/>
</dbReference>
<dbReference type="KEGG" id="aae:aq_679"/>
<dbReference type="PATRIC" id="fig|224324.8.peg.549"/>
<dbReference type="eggNOG" id="COG0056">
    <property type="taxonomic scope" value="Bacteria"/>
</dbReference>
<dbReference type="HOGENOM" id="CLU_010091_2_1_0"/>
<dbReference type="InParanoid" id="O66907"/>
<dbReference type="OrthoDB" id="9803053at2"/>
<dbReference type="Proteomes" id="UP000000798">
    <property type="component" value="Chromosome"/>
</dbReference>
<dbReference type="GO" id="GO:0005886">
    <property type="term" value="C:plasma membrane"/>
    <property type="evidence" value="ECO:0007669"/>
    <property type="project" value="UniProtKB-SubCell"/>
</dbReference>
<dbReference type="GO" id="GO:0045259">
    <property type="term" value="C:proton-transporting ATP synthase complex"/>
    <property type="evidence" value="ECO:0007669"/>
    <property type="project" value="UniProtKB-KW"/>
</dbReference>
<dbReference type="GO" id="GO:0043531">
    <property type="term" value="F:ADP binding"/>
    <property type="evidence" value="ECO:0000318"/>
    <property type="project" value="GO_Central"/>
</dbReference>
<dbReference type="GO" id="GO:0005524">
    <property type="term" value="F:ATP binding"/>
    <property type="evidence" value="ECO:0000318"/>
    <property type="project" value="GO_Central"/>
</dbReference>
<dbReference type="GO" id="GO:0046933">
    <property type="term" value="F:proton-transporting ATP synthase activity, rotational mechanism"/>
    <property type="evidence" value="ECO:0007669"/>
    <property type="project" value="UniProtKB-UniRule"/>
</dbReference>
<dbReference type="GO" id="GO:0015986">
    <property type="term" value="P:proton motive force-driven ATP synthesis"/>
    <property type="evidence" value="ECO:0000318"/>
    <property type="project" value="GO_Central"/>
</dbReference>
<dbReference type="CDD" id="cd18113">
    <property type="entry name" value="ATP-synt_F1_alpha_C"/>
    <property type="match status" value="1"/>
</dbReference>
<dbReference type="CDD" id="cd18116">
    <property type="entry name" value="ATP-synt_F1_alpha_N"/>
    <property type="match status" value="1"/>
</dbReference>
<dbReference type="CDD" id="cd01132">
    <property type="entry name" value="F1-ATPase_alpha_CD"/>
    <property type="match status" value="1"/>
</dbReference>
<dbReference type="FunFam" id="1.20.150.20:FF:000001">
    <property type="entry name" value="ATP synthase subunit alpha"/>
    <property type="match status" value="1"/>
</dbReference>
<dbReference type="FunFam" id="2.40.30.20:FF:000001">
    <property type="entry name" value="ATP synthase subunit alpha"/>
    <property type="match status" value="1"/>
</dbReference>
<dbReference type="FunFam" id="3.40.50.300:FF:000002">
    <property type="entry name" value="ATP synthase subunit alpha"/>
    <property type="match status" value="1"/>
</dbReference>
<dbReference type="Gene3D" id="2.40.30.20">
    <property type="match status" value="1"/>
</dbReference>
<dbReference type="Gene3D" id="1.20.150.20">
    <property type="entry name" value="ATP synthase alpha/beta chain, C-terminal domain"/>
    <property type="match status" value="1"/>
</dbReference>
<dbReference type="Gene3D" id="3.40.50.300">
    <property type="entry name" value="P-loop containing nucleotide triphosphate hydrolases"/>
    <property type="match status" value="1"/>
</dbReference>
<dbReference type="HAMAP" id="MF_01346">
    <property type="entry name" value="ATP_synth_alpha_bact"/>
    <property type="match status" value="1"/>
</dbReference>
<dbReference type="InterPro" id="IPR023366">
    <property type="entry name" value="ATP_synth_asu-like_sf"/>
</dbReference>
<dbReference type="InterPro" id="IPR000793">
    <property type="entry name" value="ATP_synth_asu_C"/>
</dbReference>
<dbReference type="InterPro" id="IPR038376">
    <property type="entry name" value="ATP_synth_asu_C_sf"/>
</dbReference>
<dbReference type="InterPro" id="IPR033732">
    <property type="entry name" value="ATP_synth_F1_a_nt-bd_dom"/>
</dbReference>
<dbReference type="InterPro" id="IPR005294">
    <property type="entry name" value="ATP_synth_F1_asu"/>
</dbReference>
<dbReference type="InterPro" id="IPR020003">
    <property type="entry name" value="ATPase_a/bsu_AS"/>
</dbReference>
<dbReference type="InterPro" id="IPR004100">
    <property type="entry name" value="ATPase_F1/V1/A1_a/bsu_N"/>
</dbReference>
<dbReference type="InterPro" id="IPR036121">
    <property type="entry name" value="ATPase_F1/V1/A1_a/bsu_N_sf"/>
</dbReference>
<dbReference type="InterPro" id="IPR000194">
    <property type="entry name" value="ATPase_F1/V1/A1_a/bsu_nucl-bd"/>
</dbReference>
<dbReference type="InterPro" id="IPR027417">
    <property type="entry name" value="P-loop_NTPase"/>
</dbReference>
<dbReference type="NCBIfam" id="TIGR00962">
    <property type="entry name" value="atpA"/>
    <property type="match status" value="1"/>
</dbReference>
<dbReference type="NCBIfam" id="NF009884">
    <property type="entry name" value="PRK13343.1"/>
    <property type="match status" value="1"/>
</dbReference>
<dbReference type="PANTHER" id="PTHR48082">
    <property type="entry name" value="ATP SYNTHASE SUBUNIT ALPHA, MITOCHONDRIAL"/>
    <property type="match status" value="1"/>
</dbReference>
<dbReference type="PANTHER" id="PTHR48082:SF2">
    <property type="entry name" value="ATP SYNTHASE SUBUNIT ALPHA, MITOCHONDRIAL"/>
    <property type="match status" value="1"/>
</dbReference>
<dbReference type="Pfam" id="PF00006">
    <property type="entry name" value="ATP-synt_ab"/>
    <property type="match status" value="1"/>
</dbReference>
<dbReference type="Pfam" id="PF00306">
    <property type="entry name" value="ATP-synt_ab_C"/>
    <property type="match status" value="1"/>
</dbReference>
<dbReference type="Pfam" id="PF02874">
    <property type="entry name" value="ATP-synt_ab_N"/>
    <property type="match status" value="1"/>
</dbReference>
<dbReference type="PIRSF" id="PIRSF039088">
    <property type="entry name" value="F_ATPase_subunit_alpha"/>
    <property type="match status" value="1"/>
</dbReference>
<dbReference type="SUPFAM" id="SSF47917">
    <property type="entry name" value="C-terminal domain of alpha and beta subunits of F1 ATP synthase"/>
    <property type="match status" value="1"/>
</dbReference>
<dbReference type="SUPFAM" id="SSF50615">
    <property type="entry name" value="N-terminal domain of alpha and beta subunits of F1 ATP synthase"/>
    <property type="match status" value="1"/>
</dbReference>
<dbReference type="SUPFAM" id="SSF52540">
    <property type="entry name" value="P-loop containing nucleoside triphosphate hydrolases"/>
    <property type="match status" value="1"/>
</dbReference>
<dbReference type="PROSITE" id="PS00152">
    <property type="entry name" value="ATPASE_ALPHA_BETA"/>
    <property type="match status" value="1"/>
</dbReference>
<organism>
    <name type="scientific">Aquifex aeolicus (strain VF5)</name>
    <dbReference type="NCBI Taxonomy" id="224324"/>
    <lineage>
        <taxon>Bacteria</taxon>
        <taxon>Pseudomonadati</taxon>
        <taxon>Aquificota</taxon>
        <taxon>Aquificia</taxon>
        <taxon>Aquificales</taxon>
        <taxon>Aquificaceae</taxon>
        <taxon>Aquifex</taxon>
    </lineage>
</organism>
<accession>O66907</accession>